<accession>Q70627</accession>
<reference key="1">
    <citation type="journal article" date="1994" name="AIDS Res. Hum. Retroviruses">
        <title>Viral variability and serum antibody response in a laboratory worker infected with HIV type 1 (HTLV type IIIB).</title>
        <authorList>
            <person name="Reitz M.S. Jr."/>
            <person name="Hall L."/>
            <person name="Robert-Guroff M."/>
            <person name="Lautenberger J.A."/>
            <person name="Hahn B.M."/>
            <person name="Shaw G.M."/>
            <person name="Kong L.I."/>
            <person name="Weiss S.H."/>
            <person name="Waters D."/>
            <person name="Gallo R.C."/>
            <person name="Blattner W."/>
        </authorList>
    </citation>
    <scope>NUCLEOTIDE SEQUENCE [GENOMIC RNA]</scope>
</reference>
<reference key="2">
    <citation type="journal article" date="1997" name="Protein Sci.">
        <title>Refined solution structure and backbone dynamics of HIV-1 Nef.</title>
        <authorList>
            <person name="Grzesiek S."/>
            <person name="Bax A."/>
            <person name="Hu J.S."/>
            <person name="Kaufman J."/>
            <person name="Palmer I."/>
            <person name="Stahl S.J."/>
            <person name="Tjandra N."/>
            <person name="Wingfield P.T."/>
        </authorList>
    </citation>
    <scope>STRUCTURE BY NMR OF 56-206</scope>
</reference>
<sequence>MGGKWSKSSVIGWPTVRERMRRAEPAADGVGAASQDLEKHGAITSSNTAATNADCAWLEAQEEEEVGFPVTPQVPLRPMTYKAAVDLSHFLKEKGGLEGLIHSQRRQDILDLWIYHTQGYFPDWQNYTPGPGIRYPLTFGWCYKLVPVEPEKLEEANKGENTSLLHPVSLHGMDDPEREVLEWRFDSRLAFHHVARELHPEYFKNC</sequence>
<gene>
    <name evidence="1" type="primary">nef</name>
</gene>
<comment type="function">
    <text evidence="1">Factor of infectivity and pathogenicity, required for optimal virus replication. Alters numerous pathways of T-lymphocyte function and down-regulates immunity surface molecules in order to evade host defense and increase viral infectivity. Alters the functionality of other immunity cells, like dendritic cells, monocytes/macrophages and NK cells.</text>
</comment>
<comment type="function">
    <text evidence="1">In infected CD4(+) T-lymphocytes, down-regulates the surface MHC-I, mature MHC-II, CD4, CD28, CCR5 and CXCR4 molecules. Mediates internalization and degradation of host CD4 through the interaction of with the cytoplasmic tail of CD4, the recruitment of AP-2 (clathrin adapter protein complex 2), internalization through clathrin coated pits, and subsequent transport to endosomes and lysosomes for degradation. Diverts host MHC-I molecules to the trans-Golgi network-associated endosomal compartments by an endocytic pathway to finally target them for degradation. MHC-I down-regulation may involve AP-1 (clathrin adapter protein complex 1) or possibly Src family kinase-ZAP70/Syk-PI3K cascade recruited by PACS2. In consequence infected cells are masked for immune recognition by cytotoxic T-lymphocytes. Decreasing the number of immune receptors also prevents reinfection by more HIV particles (superinfection). Down-regulates host SERINC3 and SERINC5 thereby excluding these proteins from the viral particles. Virion infectivity is drastically higher when SERINC3 or SERINC5 are excluded from the viral envelope, because these host antiviral proteins impair the membrane fusion event necessary for subsequent virion penetration.</text>
</comment>
<comment type="function">
    <text evidence="1">Bypasses host T-cell signaling by inducing a transcriptional program nearly identical to that of anti-CD3 cell activation. Interaction with TCR-zeta chain up-regulates the Fas ligand (FasL). Increasing surface FasL molecules and decreasing surface MHC-I molecules on infected CD4(+) cells send attacking cytotoxic CD8+ T-lymphocytes into apoptosis.</text>
</comment>
<comment type="function">
    <text evidence="1">Plays a role in optimizing the host cell environment for viral replication without causing cell death by apoptosis. Protects the infected cells from apoptosis in order to keep them alive until the next virus generation is ready to strike. Inhibits the Fas and TNFR-mediated death signals by blocking MAP3K5/ASK1. Decreases the half-life of TP53, protecting the infected cell against p53-mediated apoptosis. Inhibits the apoptotic signals regulated by the Bcl-2 family proteins through the formation of a Nef/PI3-kinase/PAK2 complex that leads to activation of PAK2 and induces phosphorylation of host BAD.</text>
</comment>
<comment type="function">
    <text evidence="1">Extracellular Nef protein targets CD4(+) T-lymphocytes for apoptosis by interacting with CXCR4 surface receptors.</text>
</comment>
<comment type="subunit">
    <text evidence="1">Monomer; cytosolic form. Homodimer; membrane bound form. Interacts with Nef associated p21-activated kinase (PAK2); this interaction activates PAK2. Associates with the Nef-MHC-I-AP1 complex; this complex is required for MHC-I internalization. Interacts (via C-terminus) with host PI3-kinase. Interacts with host PACS1; this interaction seems to be weak. Interacts with host PACS2. Interacts with host LCK and MAPK3; these interactions inhibit the kinase activity of the latter. Interacts with host ATP6V1H; this interaction may play a role in CD4 endocytosis. Associates with the CD4-Nef-AP2 complex; this complex is required for CD4 internalization. Interacts with host AP2 subunit alpha and AP2 subunit sigma2. Interacts with TCR-zeta chain; this interaction up-regulates the Fas ligand (FasL) surface expression. Interacts with host HCK, LYN, and SRC; these interactions activate the Src family kinases. Interacts with MAP3K5; this interaction inhibits the Fas and TNFR-mediated death signals. Interacts with beta-COP and PTE1. Interacts with human RACK1; this increases Nef phosphorylation by PKC. Interacts with TP53; this interaction decreases the half-life of TP53, protecting the infected cell against p53-mediated apoptosis.</text>
</comment>
<comment type="subcellular location">
    <subcellularLocation>
        <location evidence="1">Host cell membrane</location>
        <topology evidence="1">Lipid-anchor</topology>
        <orientation evidence="1">Cytoplasmic side</orientation>
    </subcellularLocation>
    <subcellularLocation>
        <location evidence="1">Virion</location>
    </subcellularLocation>
    <subcellularLocation>
        <location evidence="1">Secreted</location>
    </subcellularLocation>
    <subcellularLocation>
        <location evidence="1">Host Golgi apparatus membrane</location>
    </subcellularLocation>
    <text evidence="1">TGN localization requires PACS1. Associates with the inner plasma membrane through its N-terminal domain. Nef stimulates its own export via the release of exosomes. Incorporated in virions at a rate of about 10 molecules per virion, where it is cleaved.</text>
</comment>
<comment type="induction">
    <text evidence="1">Expressed early in the viral replication cycle.</text>
</comment>
<comment type="domain">
    <text evidence="1">The N-terminal domain is composed of the N-myristoyl glycine and of a cluster of positively charged amino acids. It is required for inner plasma membrane targeting of Nef and virion incorporation, and thereby for infectivity. This domain is also involved in binding to TP53.</text>
</comment>
<comment type="domain">
    <text evidence="1">The SH3-binding domain constituted of PxxP motifs mediates binding to several Src family proteins thereby regulating their tyrosine kinase activity. The same motifs also mediates the association with MAPK3, PI3-kinase and TCR-zeta.</text>
</comment>
<comment type="domain">
    <text evidence="1">The dileucine internalization motif and a diacidic motif seem to be required for binding to AP-2.</text>
</comment>
<comment type="domain">
    <text evidence="1">The acidic region binds to the sorting protein PACS-2, which targets Nef to the paranuclear region, enabling the PxxP motif to direct assembly of an SFK/ZAP-70/PI3K complex that accelerates endocytosis of cell-surface MHC-I.</text>
</comment>
<comment type="PTM">
    <text evidence="1">The virion-associated Nef proteins are cleaved by the viral protease to release the soluble C-terminal core protein. Nef is probably cleaved concomitantly with viral structural proteins on maturation of virus particles.</text>
</comment>
<comment type="PTM">
    <text evidence="1">Myristoylated.</text>
</comment>
<comment type="PTM">
    <text evidence="1">Phosphorylated on serine residues, probably by host PKCdelta and theta.</text>
</comment>
<comment type="miscellaneous">
    <text evidence="1">HIV-1 lineages are divided in three main groups, M (for Major), O (for Outlier), and N (for New, or Non-M, Non-O). The vast majority of strains found worldwide belong to the group M. Group O seems to be endemic to and largely confined to Cameroon and neighboring countries in West Central Africa, where these viruses represent a small minority of HIV-1 strains. The group N is represented by a limited number of isolates from Cameroonian persons. The group M is further subdivided in 9 clades or subtypes (A to D, F to H, J and K).</text>
</comment>
<comment type="similarity">
    <text evidence="1">Belongs to the lentivirus primate group Nef protein family.</text>
</comment>
<feature type="initiator methionine" description="Removed; by host" evidence="1">
    <location>
        <position position="1"/>
    </location>
</feature>
<feature type="chain" id="PRO_0000038325" description="Protein Nef" evidence="1">
    <location>
        <begin position="2"/>
        <end position="206"/>
    </location>
</feature>
<feature type="chain" id="PRO_0000038326" description="C-terminal core protein" evidence="1">
    <location>
        <begin position="58"/>
        <end position="206"/>
    </location>
</feature>
<feature type="region of interest" description="Acidic; interacts with host PACS1 and PACS2; stabilizes the interaction of NEF/MHC-I with host AP1M1; necessary for MHC-I internalization" evidence="1">
    <location>
        <begin position="62"/>
        <end position="65"/>
    </location>
</feature>
<feature type="region of interest" description="SH3-binding; interaction with Src family tyrosine kinases" evidence="1">
    <location>
        <begin position="69"/>
        <end position="78"/>
    </location>
</feature>
<feature type="region of interest" description="Mediates dimerization, Nef-PTE1 interaction" evidence="1">
    <location>
        <begin position="108"/>
        <end position="124"/>
    </location>
</feature>
<feature type="region of interest" description="Binding to ATP6V1H" evidence="1">
    <location>
        <begin position="148"/>
        <end position="180"/>
    </location>
</feature>
<feature type="short sequence motif" description="PxxP; stabilizes the interaction of NEF/MHC-I with host AP1M1; necessary for MHC-I internalization" evidence="1">
    <location>
        <begin position="72"/>
        <end position="75"/>
    </location>
</feature>
<feature type="short sequence motif" description="Dileucine internalization motif; necessary for CD4 internalization" evidence="1">
    <location>
        <begin position="164"/>
        <end position="165"/>
    </location>
</feature>
<feature type="short sequence motif" description="Diacidic; necessary for CD4 internalization" evidence="1">
    <location>
        <begin position="174"/>
        <end position="175"/>
    </location>
</feature>
<feature type="site" description="Might play a role in AP-1 recruitment to the Nef-MHC-I complex" evidence="1">
    <location>
        <position position="20"/>
    </location>
</feature>
<feature type="site" description="Cleavage; by viral protease" evidence="1">
    <location>
        <begin position="57"/>
        <end position="58"/>
    </location>
</feature>
<feature type="modified residue" description="Phosphoserine; by host" evidence="1">
    <location>
        <position position="6"/>
    </location>
</feature>
<feature type="lipid moiety-binding region" description="N-myristoyl glycine; by host" evidence="1">
    <location>
        <position position="2"/>
    </location>
</feature>
<feature type="helix" evidence="2">
    <location>
        <begin position="81"/>
        <end position="93"/>
    </location>
</feature>
<feature type="helix" evidence="2">
    <location>
        <begin position="106"/>
        <end position="115"/>
    </location>
</feature>
<feature type="turn" evidence="2">
    <location>
        <begin position="116"/>
        <end position="118"/>
    </location>
</feature>
<feature type="strand" evidence="2">
    <location>
        <begin position="122"/>
        <end position="124"/>
    </location>
</feature>
<feature type="strand" evidence="2">
    <location>
        <begin position="129"/>
        <end position="134"/>
    </location>
</feature>
<feature type="strand" evidence="2">
    <location>
        <begin position="136"/>
        <end position="140"/>
    </location>
</feature>
<feature type="strand" evidence="2">
    <location>
        <begin position="143"/>
        <end position="146"/>
    </location>
</feature>
<feature type="strand" evidence="2">
    <location>
        <begin position="181"/>
        <end position="185"/>
    </location>
</feature>
<feature type="helix" evidence="2">
    <location>
        <begin position="187"/>
        <end position="190"/>
    </location>
</feature>
<feature type="helix" evidence="2">
    <location>
        <begin position="194"/>
        <end position="198"/>
    </location>
</feature>
<feature type="helix" evidence="2">
    <location>
        <begin position="200"/>
        <end position="202"/>
    </location>
</feature>
<keyword id="KW-0002">3D-structure</keyword>
<keyword id="KW-0014">AIDS</keyword>
<keyword id="KW-0053">Apoptosis</keyword>
<keyword id="KW-0244">Early protein</keyword>
<keyword id="KW-1032">Host cell membrane</keyword>
<keyword id="KW-1040">Host Golgi apparatus</keyword>
<keyword id="KW-1043">Host membrane</keyword>
<keyword id="KW-0945">Host-virus interaction</keyword>
<keyword id="KW-1080">Inhibition of host adaptive immune response by virus</keyword>
<keyword id="KW-1083">Inhibition of host autophagy by virus</keyword>
<keyword id="KW-1115">Inhibition of host MHC class I molecule presentation by virus</keyword>
<keyword id="KW-1116">Inhibition of host MHC class II molecule presentation by virus</keyword>
<keyword id="KW-0449">Lipoprotein</keyword>
<keyword id="KW-0472">Membrane</keyword>
<keyword id="KW-0519">Myristate</keyword>
<keyword id="KW-0597">Phosphoprotein</keyword>
<keyword id="KW-0964">Secreted</keyword>
<keyword id="KW-0729">SH3-binding</keyword>
<keyword id="KW-0899">Viral immunoevasion</keyword>
<keyword id="KW-0946">Virion</keyword>
<keyword id="KW-0843">Virulence</keyword>
<name>NEF_HV1LW</name>
<organism>
    <name type="scientific">Human immunodeficiency virus type 1 group M subtype B (isolate LW123)</name>
    <name type="common">HIV-1</name>
    <dbReference type="NCBI Taxonomy" id="82834"/>
    <lineage>
        <taxon>Viruses</taxon>
        <taxon>Riboviria</taxon>
        <taxon>Pararnavirae</taxon>
        <taxon>Artverviricota</taxon>
        <taxon>Revtraviricetes</taxon>
        <taxon>Ortervirales</taxon>
        <taxon>Retroviridae</taxon>
        <taxon>Orthoretrovirinae</taxon>
        <taxon>Lentivirus</taxon>
        <taxon>Human immunodeficiency virus type 1</taxon>
    </lineage>
</organism>
<organismHost>
    <name type="scientific">Homo sapiens</name>
    <name type="common">Human</name>
    <dbReference type="NCBI Taxonomy" id="9606"/>
</organismHost>
<dbReference type="EMBL" id="U12055">
    <property type="protein sequence ID" value="AAA76691.1"/>
    <property type="molecule type" value="Genomic_RNA"/>
</dbReference>
<dbReference type="PDB" id="2NEF">
    <property type="method" value="NMR"/>
    <property type="chains" value="A=56-205"/>
</dbReference>
<dbReference type="PDBsum" id="2NEF"/>
<dbReference type="SMR" id="Q70627"/>
<dbReference type="EvolutionaryTrace" id="Q70627"/>
<dbReference type="Proteomes" id="UP000165413">
    <property type="component" value="Genome"/>
</dbReference>
<dbReference type="GO" id="GO:0005576">
    <property type="term" value="C:extracellular region"/>
    <property type="evidence" value="ECO:0007669"/>
    <property type="project" value="UniProtKB-SubCell"/>
</dbReference>
<dbReference type="GO" id="GO:0044178">
    <property type="term" value="C:host cell Golgi membrane"/>
    <property type="evidence" value="ECO:0007669"/>
    <property type="project" value="UniProtKB-SubCell"/>
</dbReference>
<dbReference type="GO" id="GO:0020002">
    <property type="term" value="C:host cell plasma membrane"/>
    <property type="evidence" value="ECO:0007669"/>
    <property type="project" value="UniProtKB-SubCell"/>
</dbReference>
<dbReference type="GO" id="GO:0016020">
    <property type="term" value="C:membrane"/>
    <property type="evidence" value="ECO:0007669"/>
    <property type="project" value="UniProtKB-UniRule"/>
</dbReference>
<dbReference type="GO" id="GO:0044423">
    <property type="term" value="C:virion component"/>
    <property type="evidence" value="ECO:0007669"/>
    <property type="project" value="UniProtKB-UniRule"/>
</dbReference>
<dbReference type="GO" id="GO:0051117">
    <property type="term" value="F:ATPase binding"/>
    <property type="evidence" value="ECO:0000250"/>
    <property type="project" value="UniProtKB"/>
</dbReference>
<dbReference type="GO" id="GO:0042609">
    <property type="term" value="F:CD4 receptor binding"/>
    <property type="evidence" value="ECO:0000250"/>
    <property type="project" value="UniProtKB"/>
</dbReference>
<dbReference type="GO" id="GO:0005525">
    <property type="term" value="F:GTP binding"/>
    <property type="evidence" value="ECO:0007669"/>
    <property type="project" value="UniProtKB-UniRule"/>
</dbReference>
<dbReference type="GO" id="GO:0042288">
    <property type="term" value="F:MHC class I protein binding"/>
    <property type="evidence" value="ECO:0000250"/>
    <property type="project" value="UniProtKB"/>
</dbReference>
<dbReference type="GO" id="GO:0019901">
    <property type="term" value="F:protein kinase binding"/>
    <property type="evidence" value="ECO:0000250"/>
    <property type="project" value="UniProtKB"/>
</dbReference>
<dbReference type="GO" id="GO:0017124">
    <property type="term" value="F:SH3 domain binding"/>
    <property type="evidence" value="ECO:0007669"/>
    <property type="project" value="UniProtKB-UniRule"/>
</dbReference>
<dbReference type="GO" id="GO:0005102">
    <property type="term" value="F:signaling receptor binding"/>
    <property type="evidence" value="ECO:0000250"/>
    <property type="project" value="UniProtKB"/>
</dbReference>
<dbReference type="GO" id="GO:0031996">
    <property type="term" value="F:thioesterase binding"/>
    <property type="evidence" value="ECO:0000250"/>
    <property type="project" value="UniProtKB"/>
</dbReference>
<dbReference type="GO" id="GO:0010561">
    <property type="term" value="P:negative regulation of glycoprotein biosynthetic process"/>
    <property type="evidence" value="ECO:0000250"/>
    <property type="project" value="UniProtKB"/>
</dbReference>
<dbReference type="GO" id="GO:0050848">
    <property type="term" value="P:regulation of calcium-mediated signaling"/>
    <property type="evidence" value="ECO:0000250"/>
    <property type="project" value="UniProtKB"/>
</dbReference>
<dbReference type="GO" id="GO:0046776">
    <property type="term" value="P:symbiont-mediated suppression of host antigen processing and presentation of peptide antigen via MHC class I"/>
    <property type="evidence" value="ECO:0000250"/>
    <property type="project" value="UniProtKB"/>
</dbReference>
<dbReference type="GO" id="GO:0039505">
    <property type="term" value="P:symbiont-mediated suppression of host antigen processing and presentation of peptide antigen via MHC class II"/>
    <property type="evidence" value="ECO:0007669"/>
    <property type="project" value="UniProtKB-UniRule"/>
</dbReference>
<dbReference type="GO" id="GO:0033668">
    <property type="term" value="P:symbiont-mediated suppression of host apoptosis"/>
    <property type="evidence" value="ECO:0000250"/>
    <property type="project" value="UniProtKB"/>
</dbReference>
<dbReference type="GO" id="GO:0140321">
    <property type="term" value="P:symbiont-mediated suppression of host autophagy"/>
    <property type="evidence" value="ECO:0007669"/>
    <property type="project" value="UniProtKB-KW"/>
</dbReference>
<dbReference type="GO" id="GO:0052170">
    <property type="term" value="P:symbiont-mediated suppression of host innate immune response"/>
    <property type="evidence" value="ECO:0000250"/>
    <property type="project" value="UniProtKB"/>
</dbReference>
<dbReference type="GO" id="GO:0019058">
    <property type="term" value="P:viral life cycle"/>
    <property type="evidence" value="ECO:0000250"/>
    <property type="project" value="UniProtKB"/>
</dbReference>
<dbReference type="DisProt" id="DP02888"/>
<dbReference type="FunFam" id="3.30.62.10:FF:000001">
    <property type="entry name" value="Protein Nef"/>
    <property type="match status" value="1"/>
</dbReference>
<dbReference type="FunFam" id="4.10.890.10:FF:000001">
    <property type="entry name" value="Protein Nef"/>
    <property type="match status" value="1"/>
</dbReference>
<dbReference type="Gene3D" id="4.10.890.10">
    <property type="entry name" value="HIV 1 nef anchor domain"/>
    <property type="match status" value="1"/>
</dbReference>
<dbReference type="Gene3D" id="3.30.62.10">
    <property type="entry name" value="Nef Regulatory Factor"/>
    <property type="match status" value="1"/>
</dbReference>
<dbReference type="HAMAP" id="MF_04078">
    <property type="entry name" value="NEF_HIV"/>
    <property type="match status" value="1"/>
</dbReference>
<dbReference type="IDEAL" id="IID90023"/>
<dbReference type="InterPro" id="IPR027480">
    <property type="entry name" value="HIV-1_Nef_anchor_sf"/>
</dbReference>
<dbReference type="InterPro" id="IPR027481">
    <property type="entry name" value="HIV-1_Nef_core_sf"/>
</dbReference>
<dbReference type="InterPro" id="IPR001558">
    <property type="entry name" value="HIV_Nef"/>
</dbReference>
<dbReference type="Pfam" id="PF00469">
    <property type="entry name" value="F-protein"/>
    <property type="match status" value="1"/>
</dbReference>
<dbReference type="SUPFAM" id="SSF55671">
    <property type="entry name" value="Regulatory factor Nef"/>
    <property type="match status" value="1"/>
</dbReference>
<protein>
    <recommendedName>
        <fullName evidence="1">Protein Nef</fullName>
    </recommendedName>
    <alternativeName>
        <fullName evidence="1">3'ORF</fullName>
    </alternativeName>
    <alternativeName>
        <fullName evidence="1">Negative factor</fullName>
        <shortName evidence="1">F-protein</shortName>
    </alternativeName>
    <component>
        <recommendedName>
            <fullName evidence="1">C-terminal core protein</fullName>
        </recommendedName>
    </component>
</protein>
<proteinExistence type="evidence at protein level"/>
<evidence type="ECO:0000255" key="1">
    <source>
        <dbReference type="HAMAP-Rule" id="MF_04078"/>
    </source>
</evidence>
<evidence type="ECO:0007829" key="2">
    <source>
        <dbReference type="PDB" id="2NEF"/>
    </source>
</evidence>